<protein>
    <recommendedName>
        <fullName>Polygalacturonase</fullName>
        <shortName>PG</shortName>
        <ecNumber>3.2.1.15</ecNumber>
    </recommendedName>
    <alternativeName>
        <fullName>Pectinase</fullName>
    </alternativeName>
</protein>
<dbReference type="EC" id="3.2.1.15"/>
<dbReference type="EMBL" id="L19879">
    <property type="protein sequence ID" value="AAA70402.1"/>
    <property type="molecule type" value="mRNA"/>
</dbReference>
<dbReference type="PIR" id="S42549">
    <property type="entry name" value="S42549"/>
</dbReference>
<dbReference type="RefSeq" id="NP_001302495.1">
    <property type="nucleotide sequence ID" value="NM_001315566.1"/>
</dbReference>
<dbReference type="SMR" id="P35337"/>
<dbReference type="Allergome" id="1072">
    <property type="allergen name" value="Bra n PG"/>
</dbReference>
<dbReference type="CAZy" id="GH28">
    <property type="family name" value="Glycoside Hydrolase Family 28"/>
</dbReference>
<dbReference type="GeneID" id="106427912"/>
<dbReference type="KEGG" id="bna:106427912"/>
<dbReference type="OrthoDB" id="1054415at2759"/>
<dbReference type="GO" id="GO:0005576">
    <property type="term" value="C:extracellular region"/>
    <property type="evidence" value="ECO:0007669"/>
    <property type="project" value="UniProtKB-SubCell"/>
</dbReference>
<dbReference type="GO" id="GO:0004650">
    <property type="term" value="F:polygalacturonase activity"/>
    <property type="evidence" value="ECO:0007669"/>
    <property type="project" value="UniProtKB-EC"/>
</dbReference>
<dbReference type="GO" id="GO:0005975">
    <property type="term" value="P:carbohydrate metabolic process"/>
    <property type="evidence" value="ECO:0007669"/>
    <property type="project" value="InterPro"/>
</dbReference>
<dbReference type="GO" id="GO:0071555">
    <property type="term" value="P:cell wall organization"/>
    <property type="evidence" value="ECO:0007669"/>
    <property type="project" value="UniProtKB-KW"/>
</dbReference>
<dbReference type="FunFam" id="2.160.20.10:FF:000004">
    <property type="entry name" value="Pectin lyase-like superfamily protein"/>
    <property type="match status" value="1"/>
</dbReference>
<dbReference type="Gene3D" id="2.160.20.10">
    <property type="entry name" value="Single-stranded right-handed beta-helix, Pectin lyase-like"/>
    <property type="match status" value="1"/>
</dbReference>
<dbReference type="InterPro" id="IPR000743">
    <property type="entry name" value="Glyco_hydro_28"/>
</dbReference>
<dbReference type="InterPro" id="IPR006626">
    <property type="entry name" value="PbH1"/>
</dbReference>
<dbReference type="InterPro" id="IPR012334">
    <property type="entry name" value="Pectin_lyas_fold"/>
</dbReference>
<dbReference type="InterPro" id="IPR011050">
    <property type="entry name" value="Pectin_lyase_fold/virulence"/>
</dbReference>
<dbReference type="PANTHER" id="PTHR31375">
    <property type="match status" value="1"/>
</dbReference>
<dbReference type="Pfam" id="PF00295">
    <property type="entry name" value="Glyco_hydro_28"/>
    <property type="match status" value="1"/>
</dbReference>
<dbReference type="SMART" id="SM00710">
    <property type="entry name" value="PbH1"/>
    <property type="match status" value="4"/>
</dbReference>
<dbReference type="SUPFAM" id="SSF51126">
    <property type="entry name" value="Pectin lyase-like"/>
    <property type="match status" value="1"/>
</dbReference>
<dbReference type="PROSITE" id="PS00502">
    <property type="entry name" value="POLYGALACTURONASE"/>
    <property type="match status" value="1"/>
</dbReference>
<evidence type="ECO:0000250" key="1">
    <source>
        <dbReference type="UniProtKB" id="O74213"/>
    </source>
</evidence>
<evidence type="ECO:0000255" key="2"/>
<evidence type="ECO:0000255" key="3">
    <source>
        <dbReference type="PROSITE-ProRule" id="PRU00498"/>
    </source>
</evidence>
<evidence type="ECO:0000255" key="4">
    <source>
        <dbReference type="PROSITE-ProRule" id="PRU10052"/>
    </source>
</evidence>
<evidence type="ECO:0000305" key="5"/>
<reference key="1">
    <citation type="journal article" date="1993" name="Plant Mol. Biol.">
        <title>Isolation and characterization of a polygalacturonase gene highly expressed in Brassica napus pollen.</title>
        <authorList>
            <person name="Robert L.S."/>
            <person name="Allard S."/>
            <person name="Gerster J.L."/>
            <person name="Cass L."/>
            <person name="Simmonds J."/>
        </authorList>
    </citation>
    <scope>NUCLEOTIDE SEQUENCE [MRNA]</scope>
    <source>
        <strain>cv. Westar</strain>
        <tissue>Pollen</tissue>
    </source>
</reference>
<keyword id="KW-0134">Cell wall</keyword>
<keyword id="KW-0961">Cell wall biogenesis/degradation</keyword>
<keyword id="KW-1015">Disulfide bond</keyword>
<keyword id="KW-0325">Glycoprotein</keyword>
<keyword id="KW-0326">Glycosidase</keyword>
<keyword id="KW-0378">Hydrolase</keyword>
<keyword id="KW-0677">Repeat</keyword>
<keyword id="KW-0964">Secreted</keyword>
<keyword id="KW-0732">Signal</keyword>
<sequence>MGSYLGIYTILVLCLLGYSANAEVFTAGGPPNSDITAAVLKAFTSACQAPAPSQVLIPKGDFKLGETVMTGPCKSPIEFTLQGNVKTDGGSTQGKDRWVVFEKINGFKLNGGGTFDGEGNAAWKANNCHKTFECKKLPISVRFDFVDNAEIKDVTSLDAKNFHFNVISGKNMTFDNIKIIAPAESPNTDGIHLGRCEGVKILNTKIATGDDCISVGDGMKNLLIEKVVCGPGHGISVGSLGRYGWEQDVTDITVKNCTLEGTSNGLRIKTWPSAACTTTAAGIHFEDIILNKVSNPILIDQEYCPWNQCNKNKPSTIKLVDITFRNIRGTSENKDAVKLLCSKGHPCENVEIGDINIEYTGPDGPPTFECTNVTPKLVGAQNPKACVGPVVKAPGKE</sequence>
<feature type="signal peptide" evidence="2">
    <location>
        <begin position="1"/>
        <end position="22"/>
    </location>
</feature>
<feature type="chain" id="PRO_0000024801" description="Polygalacturonase">
    <location>
        <begin position="23"/>
        <end position="397"/>
    </location>
</feature>
<feature type="repeat" description="PbH1 1" evidence="2">
    <location>
        <begin position="169"/>
        <end position="195"/>
    </location>
</feature>
<feature type="repeat" description="PbH1 2" evidence="2">
    <location>
        <begin position="196"/>
        <end position="217"/>
    </location>
</feature>
<feature type="repeat" description="PbH1 3" evidence="2">
    <location>
        <begin position="219"/>
        <end position="239"/>
    </location>
</feature>
<feature type="repeat" description="PbH1 4" evidence="2">
    <location>
        <begin position="249"/>
        <end position="270"/>
    </location>
</feature>
<feature type="active site" description="Proton donor" evidence="1">
    <location>
        <position position="210"/>
    </location>
</feature>
<feature type="active site" evidence="4">
    <location>
        <position position="233"/>
    </location>
</feature>
<feature type="glycosylation site" description="N-linked (GlcNAc...) asparagine" evidence="3">
    <location>
        <position position="171"/>
    </location>
</feature>
<feature type="glycosylation site" description="N-linked (GlcNAc...) asparagine" evidence="3">
    <location>
        <position position="256"/>
    </location>
</feature>
<feature type="disulfide bond" evidence="1">
    <location>
        <begin position="212"/>
        <end position="229"/>
    </location>
</feature>
<feature type="disulfide bond" evidence="1">
    <location>
        <begin position="341"/>
        <end position="347"/>
    </location>
</feature>
<feature type="disulfide bond" evidence="1">
    <location>
        <begin position="370"/>
        <end position="386"/>
    </location>
</feature>
<comment type="function">
    <text>May function in depolymerizing pectin during pollen development, germination, and tube growth.</text>
</comment>
<comment type="catalytic activity">
    <reaction>
        <text>(1,4-alpha-D-galacturonosyl)n+m + H2O = (1,4-alpha-D-galacturonosyl)n + (1,4-alpha-D-galacturonosyl)m.</text>
        <dbReference type="EC" id="3.2.1.15"/>
    </reaction>
</comment>
<comment type="subcellular location">
    <subcellularLocation>
        <location>Secreted</location>
    </subcellularLocation>
    <subcellularLocation>
        <location>Secreted</location>
        <location>Cell wall</location>
    </subcellularLocation>
</comment>
<comment type="tissue specificity">
    <text>Pollen.</text>
</comment>
<comment type="similarity">
    <text evidence="5">Belongs to the glycosyl hydrolase 28 family.</text>
</comment>
<proteinExistence type="evidence at transcript level"/>
<organism>
    <name type="scientific">Brassica napus</name>
    <name type="common">Rape</name>
    <dbReference type="NCBI Taxonomy" id="3708"/>
    <lineage>
        <taxon>Eukaryota</taxon>
        <taxon>Viridiplantae</taxon>
        <taxon>Streptophyta</taxon>
        <taxon>Embryophyta</taxon>
        <taxon>Tracheophyta</taxon>
        <taxon>Spermatophyta</taxon>
        <taxon>Magnoliopsida</taxon>
        <taxon>eudicotyledons</taxon>
        <taxon>Gunneridae</taxon>
        <taxon>Pentapetalae</taxon>
        <taxon>rosids</taxon>
        <taxon>malvids</taxon>
        <taxon>Brassicales</taxon>
        <taxon>Brassicaceae</taxon>
        <taxon>Brassiceae</taxon>
        <taxon>Brassica</taxon>
    </lineage>
</organism>
<name>PGLR_BRANA</name>
<accession>P35337</accession>